<keyword id="KW-0249">Electron transport</keyword>
<keyword id="KW-0952">Extinct organism protein</keyword>
<keyword id="KW-0349">Heme</keyword>
<keyword id="KW-0408">Iron</keyword>
<keyword id="KW-0472">Membrane</keyword>
<keyword id="KW-0479">Metal-binding</keyword>
<keyword id="KW-0496">Mitochondrion</keyword>
<keyword id="KW-0999">Mitochondrion inner membrane</keyword>
<keyword id="KW-0679">Respiratory chain</keyword>
<keyword id="KW-0812">Transmembrane</keyword>
<keyword id="KW-1133">Transmembrane helix</keyword>
<keyword id="KW-0813">Transport</keyword>
<keyword id="KW-0830">Ubiquinone</keyword>
<accession>Q1H8Y8</accession>
<geneLocation type="mitochondrion"/>
<protein>
    <recommendedName>
        <fullName>Cytochrome b</fullName>
    </recommendedName>
    <alternativeName>
        <fullName>Complex III subunit 3</fullName>
    </alternativeName>
    <alternativeName>
        <fullName>Complex III subunit III</fullName>
    </alternativeName>
    <alternativeName>
        <fullName>Cytochrome b-c1 complex subunit 3</fullName>
    </alternativeName>
    <alternativeName>
        <fullName>Ubiquinol-cytochrome-c reductase complex cytochrome b subunit</fullName>
    </alternativeName>
</protein>
<dbReference type="EMBL" id="AM182644">
    <property type="protein sequence ID" value="CAJ75770.1"/>
    <property type="molecule type" value="Genomic_DNA"/>
</dbReference>
<dbReference type="EMBL" id="AM182645">
    <property type="protein sequence ID" value="CAJ75771.1"/>
    <property type="molecule type" value="Genomic_DNA"/>
</dbReference>
<dbReference type="SMR" id="Q1H8Y8"/>
<dbReference type="GO" id="GO:0005743">
    <property type="term" value="C:mitochondrial inner membrane"/>
    <property type="evidence" value="ECO:0007669"/>
    <property type="project" value="UniProtKB-SubCell"/>
</dbReference>
<dbReference type="GO" id="GO:0045275">
    <property type="term" value="C:respiratory chain complex III"/>
    <property type="evidence" value="ECO:0007669"/>
    <property type="project" value="InterPro"/>
</dbReference>
<dbReference type="GO" id="GO:0046872">
    <property type="term" value="F:metal ion binding"/>
    <property type="evidence" value="ECO:0007669"/>
    <property type="project" value="UniProtKB-KW"/>
</dbReference>
<dbReference type="GO" id="GO:0008121">
    <property type="term" value="F:ubiquinol-cytochrome-c reductase activity"/>
    <property type="evidence" value="ECO:0007669"/>
    <property type="project" value="InterPro"/>
</dbReference>
<dbReference type="GO" id="GO:0006122">
    <property type="term" value="P:mitochondrial electron transport, ubiquinol to cytochrome c"/>
    <property type="evidence" value="ECO:0007669"/>
    <property type="project" value="TreeGrafter"/>
</dbReference>
<dbReference type="CDD" id="cd00290">
    <property type="entry name" value="cytochrome_b_C"/>
    <property type="match status" value="1"/>
</dbReference>
<dbReference type="CDD" id="cd00284">
    <property type="entry name" value="Cytochrome_b_N"/>
    <property type="match status" value="1"/>
</dbReference>
<dbReference type="FunFam" id="1.20.810.10:FF:000002">
    <property type="entry name" value="Cytochrome b"/>
    <property type="match status" value="1"/>
</dbReference>
<dbReference type="Gene3D" id="1.20.810.10">
    <property type="entry name" value="Cytochrome Bc1 Complex, Chain C"/>
    <property type="match status" value="1"/>
</dbReference>
<dbReference type="InterPro" id="IPR005798">
    <property type="entry name" value="Cyt_b/b6_C"/>
</dbReference>
<dbReference type="InterPro" id="IPR036150">
    <property type="entry name" value="Cyt_b/b6_C_sf"/>
</dbReference>
<dbReference type="InterPro" id="IPR005797">
    <property type="entry name" value="Cyt_b/b6_N"/>
</dbReference>
<dbReference type="InterPro" id="IPR027387">
    <property type="entry name" value="Cytb/b6-like_sf"/>
</dbReference>
<dbReference type="InterPro" id="IPR030689">
    <property type="entry name" value="Cytochrome_b"/>
</dbReference>
<dbReference type="InterPro" id="IPR048260">
    <property type="entry name" value="Cytochrome_b_C_euk/bac"/>
</dbReference>
<dbReference type="InterPro" id="IPR048259">
    <property type="entry name" value="Cytochrome_b_N_euk/bac"/>
</dbReference>
<dbReference type="InterPro" id="IPR016174">
    <property type="entry name" value="Di-haem_cyt_TM"/>
</dbReference>
<dbReference type="PANTHER" id="PTHR19271">
    <property type="entry name" value="CYTOCHROME B"/>
    <property type="match status" value="1"/>
</dbReference>
<dbReference type="PANTHER" id="PTHR19271:SF16">
    <property type="entry name" value="CYTOCHROME B"/>
    <property type="match status" value="1"/>
</dbReference>
<dbReference type="Pfam" id="PF00032">
    <property type="entry name" value="Cytochrom_B_C"/>
    <property type="match status" value="1"/>
</dbReference>
<dbReference type="Pfam" id="PF00033">
    <property type="entry name" value="Cytochrome_B"/>
    <property type="match status" value="1"/>
</dbReference>
<dbReference type="PIRSF" id="PIRSF038885">
    <property type="entry name" value="COB"/>
    <property type="match status" value="1"/>
</dbReference>
<dbReference type="SUPFAM" id="SSF81648">
    <property type="entry name" value="a domain/subunit of cytochrome bc1 complex (Ubiquinol-cytochrome c reductase)"/>
    <property type="match status" value="1"/>
</dbReference>
<dbReference type="SUPFAM" id="SSF81342">
    <property type="entry name" value="Transmembrane di-heme cytochromes"/>
    <property type="match status" value="1"/>
</dbReference>
<dbReference type="PROSITE" id="PS51003">
    <property type="entry name" value="CYTB_CTER"/>
    <property type="match status" value="1"/>
</dbReference>
<dbReference type="PROSITE" id="PS51002">
    <property type="entry name" value="CYTB_NTER"/>
    <property type="match status" value="1"/>
</dbReference>
<reference key="1">
    <citation type="journal article" date="2006" name="Mol. Phylogenet. Evol.">
        <title>Molecular phylogeny of the extinct giant deer, Megaloceros giganteus.</title>
        <authorList>
            <person name="Hughes S."/>
            <person name="Hayden T.J."/>
            <person name="Douady C.J."/>
            <person name="Tougard C."/>
            <person name="Germonpre M."/>
            <person name="Stuart A."/>
            <person name="Lbova L."/>
            <person name="Carden R.F."/>
            <person name="Hanni C."/>
            <person name="Say L."/>
        </authorList>
    </citation>
    <scope>NUCLEOTIDE SEQUENCE [GENOMIC DNA]</scope>
    <source>
        <strain>Isolate 1</strain>
        <strain>Isolate 2</strain>
        <tissue>Bone</tissue>
    </source>
</reference>
<feature type="chain" id="PRO_0000257913" description="Cytochrome b">
    <location>
        <begin position="1"/>
        <end position="379"/>
    </location>
</feature>
<feature type="transmembrane region" description="Helical" evidence="2">
    <location>
        <begin position="33"/>
        <end position="53"/>
    </location>
</feature>
<feature type="transmembrane region" description="Helical" evidence="2">
    <location>
        <begin position="77"/>
        <end position="98"/>
    </location>
</feature>
<feature type="transmembrane region" description="Helical" evidence="2">
    <location>
        <begin position="113"/>
        <end position="133"/>
    </location>
</feature>
<feature type="transmembrane region" description="Helical" evidence="2">
    <location>
        <begin position="178"/>
        <end position="198"/>
    </location>
</feature>
<feature type="transmembrane region" description="Helical" evidence="2">
    <location>
        <begin position="226"/>
        <end position="246"/>
    </location>
</feature>
<feature type="transmembrane region" description="Helical" evidence="2">
    <location>
        <begin position="288"/>
        <end position="308"/>
    </location>
</feature>
<feature type="transmembrane region" description="Helical" evidence="2">
    <location>
        <begin position="320"/>
        <end position="340"/>
    </location>
</feature>
<feature type="transmembrane region" description="Helical" evidence="2">
    <location>
        <begin position="347"/>
        <end position="367"/>
    </location>
</feature>
<feature type="binding site" description="axial binding residue" evidence="2">
    <location>
        <position position="83"/>
    </location>
    <ligand>
        <name>heme b</name>
        <dbReference type="ChEBI" id="CHEBI:60344"/>
        <label>b562</label>
    </ligand>
    <ligandPart>
        <name>Fe</name>
        <dbReference type="ChEBI" id="CHEBI:18248"/>
    </ligandPart>
</feature>
<feature type="binding site" description="axial binding residue" evidence="2">
    <location>
        <position position="97"/>
    </location>
    <ligand>
        <name>heme b</name>
        <dbReference type="ChEBI" id="CHEBI:60344"/>
        <label>b566</label>
    </ligand>
    <ligandPart>
        <name>Fe</name>
        <dbReference type="ChEBI" id="CHEBI:18248"/>
    </ligandPart>
</feature>
<feature type="binding site" description="axial binding residue" evidence="2">
    <location>
        <position position="182"/>
    </location>
    <ligand>
        <name>heme b</name>
        <dbReference type="ChEBI" id="CHEBI:60344"/>
        <label>b562</label>
    </ligand>
    <ligandPart>
        <name>Fe</name>
        <dbReference type="ChEBI" id="CHEBI:18248"/>
    </ligandPart>
</feature>
<feature type="binding site" description="axial binding residue" evidence="2">
    <location>
        <position position="196"/>
    </location>
    <ligand>
        <name>heme b</name>
        <dbReference type="ChEBI" id="CHEBI:60344"/>
        <label>b566</label>
    </ligand>
    <ligandPart>
        <name>Fe</name>
        <dbReference type="ChEBI" id="CHEBI:18248"/>
    </ligandPart>
</feature>
<feature type="binding site" evidence="2">
    <location>
        <position position="201"/>
    </location>
    <ligand>
        <name>a ubiquinone</name>
        <dbReference type="ChEBI" id="CHEBI:16389"/>
    </ligand>
</feature>
<organism>
    <name type="scientific">Megaloceros giganteus</name>
    <name type="common">Giant deer</name>
    <name type="synonym">Cervus giganteus</name>
    <dbReference type="NCBI Taxonomy" id="227166"/>
    <lineage>
        <taxon>Eukaryota</taxon>
        <taxon>Metazoa</taxon>
        <taxon>Chordata</taxon>
        <taxon>Craniata</taxon>
        <taxon>Vertebrata</taxon>
        <taxon>Euteleostomi</taxon>
        <taxon>Mammalia</taxon>
        <taxon>Eutheria</taxon>
        <taxon>Laurasiatheria</taxon>
        <taxon>Artiodactyla</taxon>
        <taxon>Ruminantia</taxon>
        <taxon>Pecora</taxon>
        <taxon>Cervidae</taxon>
        <taxon>Cervinae</taxon>
        <taxon>Megaloceros</taxon>
    </lineage>
</organism>
<comment type="function">
    <text evidence="2">Component of the ubiquinol-cytochrome c reductase complex (complex III or cytochrome b-c1 complex) that is part of the mitochondrial respiratory chain. The b-c1 complex mediates electron transfer from ubiquinol to cytochrome c. Contributes to the generation of a proton gradient across the mitochondrial membrane that is then used for ATP synthesis.</text>
</comment>
<comment type="cofactor">
    <cofactor evidence="2">
        <name>heme b</name>
        <dbReference type="ChEBI" id="CHEBI:60344"/>
    </cofactor>
    <text evidence="2">Binds 2 heme b groups non-covalently.</text>
</comment>
<comment type="subunit">
    <text evidence="2">The cytochrome bc1 complex contains 11 subunits: 3 respiratory subunits (MT-CYB, CYC1 and UQCRFS1), 2 core proteins (UQCRC1 and UQCRC2) and 6 low-molecular weight proteins (UQCRH/QCR6, UQCRB/QCR7, UQCRQ/QCR8, UQCR10/QCR9, UQCR11/QCR10 and a cleavage product of UQCRFS1). This cytochrome bc1 complex then forms a dimer.</text>
</comment>
<comment type="subcellular location">
    <subcellularLocation>
        <location evidence="2">Mitochondrion inner membrane</location>
        <topology evidence="2">Multi-pass membrane protein</topology>
    </subcellularLocation>
</comment>
<comment type="miscellaneous">
    <text evidence="1">Heme 1 (or BL or b562) is low-potential and absorbs at about 562 nm, and heme 2 (or BH or b566) is high-potential and absorbs at about 566 nm.</text>
</comment>
<comment type="similarity">
    <text evidence="3 4">Belongs to the cytochrome b family.</text>
</comment>
<comment type="caution">
    <text evidence="2">The full-length protein contains only eight transmembrane helices, not nine as predicted by bioinformatics tools.</text>
</comment>
<proteinExistence type="inferred from homology"/>
<name>CYB_MEGGI</name>
<sequence length="379" mass="42845">MTNIRKTHPLMKIVNNAFIDLPAPSNISSWWNFGSLLGICLILQILTGLFLAMHYTSDTMTAFSSVTHICRDVNYGWIIRYMHANGASMFFICLFMHVGRGLYYGSYTFLETWNIGVILLFTVMATAFVGYVLPWGQMSFWGATVITNLLSAIPYIGTNLVEWIWGGFSVDKATLTRFFAFHFILPFIIAALAMVHLLFLHETGSNNPTGIPSDADKIPFHPYYTIKDILGILLLILFLMLLVLFAPDLLGDPDNYTPANPLNTPPHIKPEWYFLFAYAILRSIPNKLGGVLALVSSILILILMPLLHTSKQRSMMFRPFSQCLFWILVADLLTLTWIGGQPVEYPFIIIGQLASVLYFLIILVLMPITSTIENNLLKW</sequence>
<evidence type="ECO:0000250" key="1"/>
<evidence type="ECO:0000250" key="2">
    <source>
        <dbReference type="UniProtKB" id="P00157"/>
    </source>
</evidence>
<evidence type="ECO:0000255" key="3">
    <source>
        <dbReference type="PROSITE-ProRule" id="PRU00967"/>
    </source>
</evidence>
<evidence type="ECO:0000255" key="4">
    <source>
        <dbReference type="PROSITE-ProRule" id="PRU00968"/>
    </source>
</evidence>
<gene>
    <name type="primary">MT-CYB</name>
    <name type="synonym">COB</name>
    <name type="synonym">CYTB</name>
    <name type="synonym">MTCYB</name>
</gene>